<protein>
    <recommendedName>
        <fullName>Tegument protein UL47</fullName>
    </recommendedName>
</protein>
<proteinExistence type="evidence at protein level"/>
<feature type="chain" id="PRO_0000116076" description="Tegument protein UL47">
    <location>
        <begin position="1"/>
        <end position="742"/>
    </location>
</feature>
<feature type="region of interest" description="Disordered" evidence="4">
    <location>
        <begin position="1"/>
        <end position="128"/>
    </location>
</feature>
<feature type="region of interest" description="Disordered" evidence="4">
    <location>
        <begin position="155"/>
        <end position="199"/>
    </location>
</feature>
<feature type="short sequence motif" description="Nuclear localization signal" evidence="3">
    <location>
        <begin position="10"/>
        <end position="30"/>
    </location>
</feature>
<feature type="short sequence motif" description="Nuclear export signal" evidence="3">
    <location>
        <begin position="95"/>
        <end position="122"/>
    </location>
</feature>
<feature type="short sequence motif" description="Nuclear export signal" evidence="3">
    <location>
        <begin position="485"/>
        <end position="495"/>
    </location>
</feature>
<feature type="compositionally biased region" description="Basic and acidic residues" evidence="4">
    <location>
        <begin position="1"/>
        <end position="10"/>
    </location>
</feature>
<feature type="compositionally biased region" description="Low complexity" evidence="4">
    <location>
        <begin position="18"/>
        <end position="37"/>
    </location>
</feature>
<feature type="compositionally biased region" description="Basic and acidic residues" evidence="4">
    <location>
        <begin position="38"/>
        <end position="62"/>
    </location>
</feature>
<feature type="compositionally biased region" description="Acidic residues" evidence="4">
    <location>
        <begin position="63"/>
        <end position="88"/>
    </location>
</feature>
<keyword id="KW-1035">Host cytoplasm</keyword>
<keyword id="KW-1048">Host nucleus</keyword>
<keyword id="KW-0426">Late protein</keyword>
<keyword id="KW-0804">Transcription</keyword>
<keyword id="KW-0805">Transcription regulation</keyword>
<keyword id="KW-0946">Virion</keyword>
<keyword id="KW-0920">Virion tegument</keyword>
<dbReference type="EMBL" id="D10327">
    <property type="protein sequence ID" value="BAA01170.1"/>
    <property type="molecule type" value="Genomic_DNA"/>
</dbReference>
<dbReference type="EMBL" id="Z11610">
    <property type="protein sequence ID" value="CAA77683.1"/>
    <property type="molecule type" value="Genomic_DNA"/>
</dbReference>
<dbReference type="PIR" id="JQ1435">
    <property type="entry name" value="TNBEB1"/>
</dbReference>
<dbReference type="IntAct" id="P30021">
    <property type="interactions" value="2"/>
</dbReference>
<dbReference type="GO" id="GO:0030430">
    <property type="term" value="C:host cell cytoplasm"/>
    <property type="evidence" value="ECO:0007669"/>
    <property type="project" value="UniProtKB-SubCell"/>
</dbReference>
<dbReference type="GO" id="GO:0044095">
    <property type="term" value="C:host cell nucleoplasm"/>
    <property type="evidence" value="ECO:0000315"/>
    <property type="project" value="AgBase"/>
</dbReference>
<dbReference type="GO" id="GO:0019033">
    <property type="term" value="C:viral tegument"/>
    <property type="evidence" value="ECO:0007669"/>
    <property type="project" value="UniProtKB-SubCell"/>
</dbReference>
<dbReference type="GO" id="GO:0006355">
    <property type="term" value="P:regulation of DNA-templated transcription"/>
    <property type="evidence" value="ECO:0007669"/>
    <property type="project" value="InterPro"/>
</dbReference>
<dbReference type="InterPro" id="IPR005029">
    <property type="entry name" value="Herpes_UL47"/>
</dbReference>
<dbReference type="Pfam" id="PF03362">
    <property type="entry name" value="Herpes_UL47"/>
    <property type="match status" value="1"/>
</dbReference>
<organismHost>
    <name type="scientific">Bos taurus</name>
    <name type="common">Bovine</name>
    <dbReference type="NCBI Taxonomy" id="9913"/>
</organismHost>
<name>TEG5_BHV1P</name>
<sequence>MDAARDGRPERRPRRSGTYRTHPFQRPSARRSLLDALRAADAEAAERPRVRRPRPDFQRPPDEDTSEDENVYDYIDGDSSDSADDYDSDYFTANRGPNHGAGDAMDTDAPPERAPEGGAPQDYLTAHLRAIEALPESAPHRSLLERTARTVYAHEFPPRDLSAGSRAPAQRARRSLRGFPRGGGGGQEPGPDDEGDDAADLREDLVPDEAYAHLERDERLSEGPPLLNMEAAAAAAGERSVVEELFTYAPAQPQVEVPLPRILEGRVRPSAFFAQMPLDALCRTPPNDQRVVRERRAWDMAGTPHGLLITTWSTVDPEFSIGGMYVGAPEGTRPRLVWRRAMKQAMALQYRLGVGGLCRAVDGARMPPTEALLFLAARAAARSAQLPFFVAAGARGRRRAAPARGGGWAAGSHAVHATGRVPHATLFRGSMGSLIYWHELRVMLTAVPALCARYAGAGLQSAELYLLALRHSEAPGYTANERYALSAYLTLFVALAERAVRWLYLAGAHLLGPHPTAAAFREVRAKIPYERLPLGSATLHDAEVETVDSATFQEALAFSALAHVYGEAYVAVRTATTLLMAEYAAHAERRDVREMTAAFLGVGLIAQRLMGSLEPAAELRSRRSGVRGPACPTVREGTLARYSLLADAALPLVRPVSLVEFWEARDGVMRELRLRPVASPPLAGKRRVMELYLSLDSIEALVGREPLGSRPVLGPLVDIAEALADHPHLVTGDGRGPRLGGR</sequence>
<gene>
    <name type="ORF">UL47</name>
</gene>
<evidence type="ECO:0000250" key="1"/>
<evidence type="ECO:0000250" key="2">
    <source>
        <dbReference type="UniProtKB" id="P10231"/>
    </source>
</evidence>
<evidence type="ECO:0000255" key="3"/>
<evidence type="ECO:0000256" key="4">
    <source>
        <dbReference type="SAM" id="MobiDB-lite"/>
    </source>
</evidence>
<evidence type="ECO:0000305" key="5"/>
<accession>P30021</accession>
<reference key="1">
    <citation type="journal article" date="1991" name="J. Gen. Virol.">
        <title>The most abundant protein in bovine herpes 1 virions is a homologue of herpes simplex virus type 1 UL47.</title>
        <authorList>
            <person name="Carpenter D.E."/>
            <person name="Misra V."/>
        </authorList>
    </citation>
    <scope>NUCLEOTIDE SEQUENCE [GENOMIC DNA]</scope>
</reference>
<reference key="2">
    <citation type="journal article" date="2006" name="J. Virol.">
        <title>Characterization of a novel transferable CRM-1-independent nuclear export signal in a herpesvirus tegument protein that shuttles between the nucleus and cytoplasm.</title>
        <authorList>
            <person name="Verhagen J."/>
            <person name="Donnelly M."/>
            <person name="Elliott G."/>
        </authorList>
    </citation>
    <scope>SUBCELLULAR LOCATION</scope>
    <scope>NUCLEAR EXPORT SIGNAL</scope>
    <scope>NUCLEAR LOCALIZATION SIGNAL</scope>
</reference>
<organism>
    <name type="scientific">Bovine herpesvirus 1.1 (strain P8-2)</name>
    <name type="common">BoHV-1</name>
    <name type="synonym">Infectious bovine rhinotracheitis virus</name>
    <dbReference type="NCBI Taxonomy" id="10324"/>
    <lineage>
        <taxon>Viruses</taxon>
        <taxon>Duplodnaviria</taxon>
        <taxon>Heunggongvirae</taxon>
        <taxon>Peploviricota</taxon>
        <taxon>Herviviricetes</taxon>
        <taxon>Herpesvirales</taxon>
        <taxon>Orthoherpesviridae</taxon>
        <taxon>Alphaherpesvirinae</taxon>
        <taxon>Varicellovirus</taxon>
        <taxon>Varicellovirus bovinealpha1</taxon>
    </lineage>
</organism>
<comment type="function">
    <text evidence="2">Tegument protein that can bind to various RNA transcripts. Plays a role in the attenuation of selective viral and cellular mRNA degradation by modulating the activity of host shutoff RNase UL41/VHS. Also plays a role in the primary envelopment of virions in the perinuclear space, probably by interacting with two nuclear egress proteins UL31 and UL34.</text>
</comment>
<comment type="subunit">
    <text evidence="2">Interacts with US3 kinase. Interacts with UL31 and UL34; these interactions seem important for efficient virion nuclear egress. Interacts with UL41/VHS.</text>
</comment>
<comment type="interaction">
    <interactant intactId="EBI-11301368">
        <id>P30021</id>
    </interactant>
    <interactant intactId="EBI-11296420">
        <id>A1A4K3</id>
        <label>DDB1</label>
    </interactant>
    <organismsDiffer>true</organismsDiffer>
    <experiments>7</experiments>
</comment>
<comment type="subcellular location">
    <subcellularLocation>
        <location evidence="2">Virion tegument</location>
    </subcellularLocation>
    <subcellularLocation>
        <location evidence="2">Host nucleus</location>
    </subcellularLocation>
    <subcellularLocation>
        <location evidence="2">Host cytoplasm</location>
    </subcellularLocation>
    <text evidence="2">Major tegument protein of the virion. Undergoes nucleocytoplasmic shuttling during infection. Localizes to the major sites of transcription in the infected cell nucleus.</text>
</comment>
<comment type="domain">
    <text evidence="2">The nuclear export signal is CRM1-dependent.</text>
</comment>
<comment type="PTM">
    <text evidence="2">Phosphorylated by US3. This phosphorylation is required for proper nuclear localization.</text>
</comment>
<comment type="miscellaneous">
    <text evidence="1">Expressed in late in the infection.</text>
</comment>
<comment type="similarity">
    <text evidence="5">Belongs to the alphaherpesvirinae HHV-1 UL47 family.</text>
</comment>